<proteinExistence type="inferred from homology"/>
<comment type="function">
    <text evidence="1">Initiates and terminates the replication only of its own subviral DNA molecule. The closed circular ssDNA genome is first converted to a superhelical dsDNA. Rep binds a specific hairpin at the genome origin of replication. Introduces an endonucleolytic nick within the intergenic region of the genome, thereby initiating the rolling circle replication (RCR). Following cleavage, binds covalently to the 5'-phosphate of DNA as a tyrosyl ester. The cleavage gives rise to a free 3'-OH that serves as a primer for the cellular DNA polymerase. The polymerase synthesizes the (+) strand DNA by rolling circle mechanism. After one round of replication, a Rep-catalyzed nucleotidyl transfer reaction releases a circular single-stranded virus genome, thereby terminating the replication. Displays origin-specific DNA cleavage, nucleotidyl transferase, ATPase and helicase activities (By similarity).</text>
</comment>
<comment type="catalytic activity">
    <reaction>
        <text>ATP + H2O = ADP + phosphate + H(+)</text>
        <dbReference type="Rhea" id="RHEA:13065"/>
        <dbReference type="ChEBI" id="CHEBI:15377"/>
        <dbReference type="ChEBI" id="CHEBI:15378"/>
        <dbReference type="ChEBI" id="CHEBI:30616"/>
        <dbReference type="ChEBI" id="CHEBI:43474"/>
        <dbReference type="ChEBI" id="CHEBI:456216"/>
    </reaction>
</comment>
<comment type="cofactor">
    <cofactor evidence="1">
        <name>Mg(2+)</name>
        <dbReference type="ChEBI" id="CHEBI:18420"/>
    </cofactor>
    <cofactor evidence="1">
        <name>Mn(2+)</name>
        <dbReference type="ChEBI" id="CHEBI:29035"/>
    </cofactor>
    <text evidence="1">Divalent metal cations, possibly Mg(2+) or Mn(2+).</text>
</comment>
<comment type="subunit">
    <text evidence="1 4">Homooligomer (Potential). Rep binds to repeated DNA motifs (iterons) (By similarity).</text>
</comment>
<comment type="subcellular location">
    <subcellularLocation>
        <location evidence="4">Host nucleus</location>
    </subcellularLocation>
</comment>
<comment type="domain">
    <text>There are 3 rolling circle replication (RCR) motifs. RCR-2 is probably involved in metal coordination. RCR-3 is required for phosphodiester bond cleavage for initiation of RCR.</text>
</comment>
<comment type="miscellaneous">
    <text>The genome of nanoviruses is composed of six to eight segments. In addition, some isolates contain subviral DNAs.</text>
</comment>
<comment type="similarity">
    <text evidence="4">Belongs to the nanoviridea/circoviridae replication-associated protein family.</text>
</comment>
<comment type="caution">
    <text evidence="4">This protein is encoded by a subviral DNA that is not present in all isolates of the virus.</text>
</comment>
<keyword id="KW-0067">ATP-binding</keyword>
<keyword id="KW-0190">Covalent protein-DNA linkage</keyword>
<keyword id="KW-0235">DNA replication</keyword>
<keyword id="KW-0238">DNA-binding</keyword>
<keyword id="KW-0255">Endonuclease</keyword>
<keyword id="KW-0347">Helicase</keyword>
<keyword id="KW-1048">Host nucleus</keyword>
<keyword id="KW-0378">Hydrolase</keyword>
<keyword id="KW-0479">Metal-binding</keyword>
<keyword id="KW-0511">Multifunctional enzyme</keyword>
<keyword id="KW-0540">Nuclease</keyword>
<keyword id="KW-0547">Nucleotide-binding</keyword>
<keyword id="KW-0548">Nucleotidyltransferase</keyword>
<keyword id="KW-0808">Transferase</keyword>
<accession>Q9Z0D3</accession>
<sequence length="284" mass="33349">MPTVQSTCWVFTLNFKGEIPILPFNERVQYACWQHERVGHDHLQGFIQMKAQQSLGQMKAIIPGAHFEKMRALNSDQAKAYAMKEDTRIEGPWEYGKYIKKGSHKRKIMERFEDDPEEMKIEDPSLYRRCLSRKMTEEQRSTAEWNYDMKPWQDQVIQEIEETPDYRKIIWVYGPKGGEGKSTFARYLSLKQGWGYLPGGPTHDMLHIISGEPKNNWVFDIPRVASEYVNYGVLEQVKNRVMVNTKYEPIVIRDDNHPVHVIVFANCMPDFTKISEDRMKIVHC</sequence>
<organism>
    <name type="scientific">Milk vetch dwarf C3 alphasatellite</name>
    <name type="common">MVDC3A</name>
    <dbReference type="NCBI Taxonomy" id="1455654"/>
    <lineage>
        <taxon>Viruses</taxon>
        <taxon>Viruses incertae sedis</taxon>
        <taxon>Alphasatellitidae</taxon>
        <taxon>Nanoalphasatellitinae</taxon>
        <taxon>Clostunsatellite</taxon>
        <taxon>Milk vetch dwarf alphasatellite 2</taxon>
    </lineage>
</organism>
<gene>
    <name type="primary">C3</name>
</gene>
<name>REP3_MVDC3</name>
<dbReference type="EC" id="2.7.7.-"/>
<dbReference type="EC" id="3.1.21.-"/>
<dbReference type="EC" id="3.6.1.-"/>
<dbReference type="EMBL" id="AB000922">
    <property type="protein sequence ID" value="BAA33982.1"/>
    <property type="molecule type" value="Genomic_DNA"/>
</dbReference>
<dbReference type="RefSeq" id="NP_619761.1">
    <property type="nucleotide sequence ID" value="NC_003640.1"/>
</dbReference>
<dbReference type="SMR" id="Q9Z0D3"/>
<dbReference type="KEGG" id="vg:18479558"/>
<dbReference type="Proteomes" id="UP001508042">
    <property type="component" value="Segment 3"/>
</dbReference>
<dbReference type="GO" id="GO:0042025">
    <property type="term" value="C:host cell nucleus"/>
    <property type="evidence" value="ECO:0007669"/>
    <property type="project" value="UniProtKB-SubCell"/>
</dbReference>
<dbReference type="GO" id="GO:0005524">
    <property type="term" value="F:ATP binding"/>
    <property type="evidence" value="ECO:0007669"/>
    <property type="project" value="UniProtKB-KW"/>
</dbReference>
<dbReference type="GO" id="GO:0016887">
    <property type="term" value="F:ATP hydrolysis activity"/>
    <property type="evidence" value="ECO:0007669"/>
    <property type="project" value="RHEA"/>
</dbReference>
<dbReference type="GO" id="GO:0003677">
    <property type="term" value="F:DNA binding"/>
    <property type="evidence" value="ECO:0007669"/>
    <property type="project" value="UniProtKB-KW"/>
</dbReference>
<dbReference type="GO" id="GO:0004519">
    <property type="term" value="F:endonuclease activity"/>
    <property type="evidence" value="ECO:0007669"/>
    <property type="project" value="UniProtKB-KW"/>
</dbReference>
<dbReference type="GO" id="GO:0046872">
    <property type="term" value="F:metal ion binding"/>
    <property type="evidence" value="ECO:0007669"/>
    <property type="project" value="UniProtKB-KW"/>
</dbReference>
<dbReference type="GO" id="GO:0016779">
    <property type="term" value="F:nucleotidyltransferase activity"/>
    <property type="evidence" value="ECO:0007669"/>
    <property type="project" value="UniProtKB-KW"/>
</dbReference>
<dbReference type="GO" id="GO:0003723">
    <property type="term" value="F:RNA binding"/>
    <property type="evidence" value="ECO:0007669"/>
    <property type="project" value="InterPro"/>
</dbReference>
<dbReference type="GO" id="GO:0003724">
    <property type="term" value="F:RNA helicase activity"/>
    <property type="evidence" value="ECO:0007669"/>
    <property type="project" value="InterPro"/>
</dbReference>
<dbReference type="GO" id="GO:0006260">
    <property type="term" value="P:DNA replication"/>
    <property type="evidence" value="ECO:0007669"/>
    <property type="project" value="UniProtKB-KW"/>
</dbReference>
<dbReference type="Gene3D" id="3.40.1310.20">
    <property type="match status" value="1"/>
</dbReference>
<dbReference type="InterPro" id="IPR049912">
    <property type="entry name" value="CRESS_DNA_REP"/>
</dbReference>
<dbReference type="InterPro" id="IPR000605">
    <property type="entry name" value="Helicase_SF3_ssDNA/RNA_vir"/>
</dbReference>
<dbReference type="Pfam" id="PF00910">
    <property type="entry name" value="RNA_helicase"/>
    <property type="match status" value="1"/>
</dbReference>
<dbReference type="Pfam" id="PF02407">
    <property type="entry name" value="Viral_Rep"/>
    <property type="match status" value="1"/>
</dbReference>
<dbReference type="PROSITE" id="PS52020">
    <property type="entry name" value="CRESS_DNA_REP"/>
    <property type="match status" value="1"/>
</dbReference>
<protein>
    <recommendedName>
        <fullName>Para-Rep C3</fullName>
        <shortName>Rep3</shortName>
        <ecNumber>2.7.7.-</ecNumber>
        <ecNumber>3.1.21.-</ecNumber>
        <ecNumber>3.6.1.-</ecNumber>
    </recommendedName>
    <alternativeName>
        <fullName>Replication-associated protein of non-essential DNA C3</fullName>
    </alternativeName>
</protein>
<evidence type="ECO:0000250" key="1"/>
<evidence type="ECO:0000255" key="2"/>
<evidence type="ECO:0000255" key="3">
    <source>
        <dbReference type="PROSITE-ProRule" id="PRU01364"/>
    </source>
</evidence>
<evidence type="ECO:0000305" key="4"/>
<reference key="1">
    <citation type="journal article" date="1998" name="J. Gen. Virol.">
        <title>Sequences of ten circular ssDNA components associated with the milk vetch dwarf virus genome.</title>
        <authorList>
            <person name="Sano Y."/>
            <person name="Wada M."/>
            <person name="Hashimoto Y."/>
            <person name="Matsumoto T."/>
            <person name="Kojima M."/>
        </authorList>
    </citation>
    <scope>NUCLEOTIDE SEQUENCE [GENOMIC DNA]</scope>
</reference>
<feature type="chain" id="PRO_0000378524" description="Para-Rep C3">
    <location>
        <begin position="1"/>
        <end position="284"/>
    </location>
</feature>
<feature type="domain" description="CRESS-DNA virus Rep endonuclease" evidence="3">
    <location>
        <begin position="3"/>
        <end position="98"/>
    </location>
</feature>
<feature type="short sequence motif" description="RCR-1" evidence="3">
    <location>
        <begin position="10"/>
        <end position="13"/>
    </location>
</feature>
<feature type="short sequence motif" description="RCR-2" evidence="3">
    <location>
        <begin position="42"/>
        <end position="44"/>
    </location>
</feature>
<feature type="short sequence motif" description="Nuclear localization signal" evidence="2">
    <location>
        <begin position="51"/>
        <end position="71"/>
    </location>
</feature>
<feature type="short sequence motif" description="RCR-3" evidence="3">
    <location>
        <begin position="81"/>
        <end position="84"/>
    </location>
</feature>
<feature type="short sequence motif" description="Nuclear localization signal" evidence="2">
    <location>
        <begin position="98"/>
        <end position="104"/>
    </location>
</feature>
<feature type="active site" description="For DNA cleavage activity" evidence="3">
    <location>
        <position position="81"/>
    </location>
</feature>
<feature type="binding site" evidence="2">
    <location>
        <position position="36"/>
    </location>
    <ligand>
        <name>a divalent metal cation</name>
        <dbReference type="ChEBI" id="CHEBI:60240"/>
    </ligand>
</feature>
<feature type="binding site" evidence="2">
    <location>
        <position position="42"/>
    </location>
    <ligand>
        <name>a divalent metal cation</name>
        <dbReference type="ChEBI" id="CHEBI:60240"/>
    </ligand>
</feature>
<feature type="binding site" evidence="2">
    <location>
        <position position="86"/>
    </location>
    <ligand>
        <name>a divalent metal cation</name>
        <dbReference type="ChEBI" id="CHEBI:60240"/>
    </ligand>
</feature>
<feature type="binding site" evidence="1">
    <location>
        <begin position="174"/>
        <end position="182"/>
    </location>
    <ligand>
        <name>ATP</name>
        <dbReference type="ChEBI" id="CHEBI:30616"/>
    </ligand>
</feature>